<feature type="chain" id="PRO_0000413592" description="F420-dependent glucose-6-phosphate dehydrogenase">
    <location>
        <begin position="1"/>
        <end position="336"/>
    </location>
</feature>
<feature type="active site" description="Proton donor" evidence="1">
    <location>
        <position position="40"/>
    </location>
</feature>
<feature type="active site" description="Proton acceptor" evidence="1">
    <location>
        <position position="109"/>
    </location>
</feature>
<feature type="binding site" evidence="1">
    <location>
        <position position="39"/>
    </location>
    <ligand>
        <name>coenzyme F420-(gamma-Glu)n</name>
        <dbReference type="ChEBI" id="CHEBI:133980"/>
    </ligand>
</feature>
<feature type="binding site" evidence="1">
    <location>
        <position position="76"/>
    </location>
    <ligand>
        <name>coenzyme F420-(gamma-Glu)n</name>
        <dbReference type="ChEBI" id="CHEBI:133980"/>
    </ligand>
</feature>
<feature type="binding site" evidence="1">
    <location>
        <begin position="107"/>
        <end position="108"/>
    </location>
    <ligand>
        <name>coenzyme F420-(gamma-Glu)n</name>
        <dbReference type="ChEBI" id="CHEBI:133980"/>
    </ligand>
</feature>
<feature type="binding site" evidence="1">
    <location>
        <position position="112"/>
    </location>
    <ligand>
        <name>coenzyme F420-(gamma-Glu)n</name>
        <dbReference type="ChEBI" id="CHEBI:133980"/>
    </ligand>
</feature>
<feature type="binding site" evidence="1">
    <location>
        <begin position="177"/>
        <end position="178"/>
    </location>
    <ligand>
        <name>coenzyme F420-(gamma-Glu)n</name>
        <dbReference type="ChEBI" id="CHEBI:133980"/>
    </ligand>
</feature>
<feature type="binding site" evidence="1">
    <location>
        <begin position="180"/>
        <end position="181"/>
    </location>
    <ligand>
        <name>coenzyme F420-(gamma-Glu)n</name>
        <dbReference type="ChEBI" id="CHEBI:133980"/>
    </ligand>
</feature>
<feature type="binding site" evidence="1">
    <location>
        <position position="195"/>
    </location>
    <ligand>
        <name>substrate</name>
    </ligand>
</feature>
<feature type="binding site" evidence="1">
    <location>
        <position position="198"/>
    </location>
    <ligand>
        <name>substrate</name>
    </ligand>
</feature>
<feature type="binding site" evidence="1">
    <location>
        <position position="259"/>
    </location>
    <ligand>
        <name>substrate</name>
    </ligand>
</feature>
<feature type="binding site" evidence="1">
    <location>
        <position position="283"/>
    </location>
    <ligand>
        <name>substrate</name>
    </ligand>
</feature>
<keyword id="KW-0119">Carbohydrate metabolism</keyword>
<keyword id="KW-0560">Oxidoreductase</keyword>
<name>FGD_MYCA1</name>
<evidence type="ECO:0000255" key="1">
    <source>
        <dbReference type="HAMAP-Rule" id="MF_02123"/>
    </source>
</evidence>
<accession>A0QLV0</accession>
<sequence length="336" mass="37354">MAELKLGYKASAEQFAPRELVELAVAAEAHGMDSATVSDHFQPWRHEGGHAPFSLAWMTAVGERTTRITLGTSVLTPTFRYNPAVVAQAFATMACLYPGRIFLGVGTGEALNEIATGYQGEWPEFKERFARLRESVRLMRELWRGDRVDFDGEYYRLKGASIYDVPDGGVPIYIAAGGPAVAKYAGRAGDGFICTSGKGEELYKDKLIPAVKEGAAINDRNVDDIDKMIEIKISYDPDPELALENTRFWAPLSLTAEQKHSIDDPIEMEKAADALPIEQVAKRWIVASDPDEAVAKVKDYVDWGLNHLVFHAPGHDQRRFLELFEKDLAPRLRRLG</sequence>
<organism>
    <name type="scientific">Mycobacterium avium (strain 104)</name>
    <dbReference type="NCBI Taxonomy" id="243243"/>
    <lineage>
        <taxon>Bacteria</taxon>
        <taxon>Bacillati</taxon>
        <taxon>Actinomycetota</taxon>
        <taxon>Actinomycetes</taxon>
        <taxon>Mycobacteriales</taxon>
        <taxon>Mycobacteriaceae</taxon>
        <taxon>Mycobacterium</taxon>
        <taxon>Mycobacterium avium complex (MAC)</taxon>
    </lineage>
</organism>
<comment type="function">
    <text evidence="1">Catalyzes the coenzyme F420-dependent oxidation of glucose 6-phosphate (G6P) to 6-phosphogluconolactone. Appears to have a role in resistance to oxidative stress, via its consumption of G6P that serves as a source of reducing power to combat oxidative stress in mycobacteria.</text>
</comment>
<comment type="catalytic activity">
    <reaction evidence="1">
        <text>oxidized coenzyme F420-(gamma-L-Glu)(n) + D-glucose 6-phosphate + H(+) = 6-phospho-D-glucono-1,5-lactone + reduced coenzyme F420-(gamma-L-Glu)(n)</text>
        <dbReference type="Rhea" id="RHEA:27294"/>
        <dbReference type="Rhea" id="RHEA-COMP:12939"/>
        <dbReference type="Rhea" id="RHEA-COMP:14378"/>
        <dbReference type="ChEBI" id="CHEBI:15378"/>
        <dbReference type="ChEBI" id="CHEBI:57955"/>
        <dbReference type="ChEBI" id="CHEBI:61548"/>
        <dbReference type="ChEBI" id="CHEBI:133980"/>
        <dbReference type="ChEBI" id="CHEBI:139511"/>
        <dbReference type="EC" id="1.1.98.2"/>
    </reaction>
</comment>
<comment type="subunit">
    <text evidence="1">Homodimer.</text>
</comment>
<comment type="similarity">
    <text evidence="1">Belongs to the F420-dependent glucose-6-phosphate dehydrogenase family.</text>
</comment>
<dbReference type="EC" id="1.1.98.2" evidence="1"/>
<dbReference type="EMBL" id="CP000479">
    <property type="protein sequence ID" value="ABK68339.1"/>
    <property type="molecule type" value="Genomic_DNA"/>
</dbReference>
<dbReference type="RefSeq" id="WP_003873826.1">
    <property type="nucleotide sequence ID" value="NC_008595.1"/>
</dbReference>
<dbReference type="SMR" id="A0QLV0"/>
<dbReference type="KEGG" id="mav:MAV_4761"/>
<dbReference type="HOGENOM" id="CLU_027853_4_0_11"/>
<dbReference type="Proteomes" id="UP000001574">
    <property type="component" value="Chromosome"/>
</dbReference>
<dbReference type="GO" id="GO:0070967">
    <property type="term" value="F:coenzyme F420 binding"/>
    <property type="evidence" value="ECO:0007669"/>
    <property type="project" value="UniProtKB-UniRule"/>
</dbReference>
<dbReference type="GO" id="GO:0052749">
    <property type="term" value="F:glucose-6-phosphate dehydrogenase (coenzyme F420) activity"/>
    <property type="evidence" value="ECO:0007669"/>
    <property type="project" value="UniProtKB-EC"/>
</dbReference>
<dbReference type="GO" id="GO:0016705">
    <property type="term" value="F:oxidoreductase activity, acting on paired donors, with incorporation or reduction of molecular oxygen"/>
    <property type="evidence" value="ECO:0007669"/>
    <property type="project" value="InterPro"/>
</dbReference>
<dbReference type="GO" id="GO:0005975">
    <property type="term" value="P:carbohydrate metabolic process"/>
    <property type="evidence" value="ECO:0007669"/>
    <property type="project" value="UniProtKB-UniRule"/>
</dbReference>
<dbReference type="CDD" id="cd01097">
    <property type="entry name" value="Tetrahydromethanopterin_reductase"/>
    <property type="match status" value="1"/>
</dbReference>
<dbReference type="FunFam" id="3.20.20.30:FF:000004">
    <property type="entry name" value="F420-dependent glucose-6-phosphate dehydrogenase"/>
    <property type="match status" value="1"/>
</dbReference>
<dbReference type="Gene3D" id="3.20.20.30">
    <property type="entry name" value="Luciferase-like domain"/>
    <property type="match status" value="1"/>
</dbReference>
<dbReference type="HAMAP" id="MF_02123">
    <property type="entry name" value="F420_G6P_DH"/>
    <property type="match status" value="1"/>
</dbReference>
<dbReference type="InterPro" id="IPR019944">
    <property type="entry name" value="F420-dep_G6P_DH"/>
</dbReference>
<dbReference type="InterPro" id="IPR050564">
    <property type="entry name" value="F420-G6PD/mer"/>
</dbReference>
<dbReference type="InterPro" id="IPR019945">
    <property type="entry name" value="F420_G6P_DH-rel"/>
</dbReference>
<dbReference type="InterPro" id="IPR011251">
    <property type="entry name" value="Luciferase-like_dom"/>
</dbReference>
<dbReference type="InterPro" id="IPR036661">
    <property type="entry name" value="Luciferase-like_sf"/>
</dbReference>
<dbReference type="NCBIfam" id="TIGR03554">
    <property type="entry name" value="F420_G6P_DH"/>
    <property type="match status" value="1"/>
</dbReference>
<dbReference type="NCBIfam" id="TIGR03557">
    <property type="entry name" value="F420_G6P_family"/>
    <property type="match status" value="1"/>
</dbReference>
<dbReference type="PANTHER" id="PTHR43244">
    <property type="match status" value="1"/>
</dbReference>
<dbReference type="PANTHER" id="PTHR43244:SF1">
    <property type="entry name" value="5,10-METHYLENETETRAHYDROMETHANOPTERIN REDUCTASE"/>
    <property type="match status" value="1"/>
</dbReference>
<dbReference type="Pfam" id="PF00296">
    <property type="entry name" value="Bac_luciferase"/>
    <property type="match status" value="1"/>
</dbReference>
<dbReference type="SUPFAM" id="SSF51679">
    <property type="entry name" value="Bacterial luciferase-like"/>
    <property type="match status" value="1"/>
</dbReference>
<reference key="1">
    <citation type="submission" date="2006-10" db="EMBL/GenBank/DDBJ databases">
        <authorList>
            <person name="Fleischmann R.D."/>
            <person name="Dodson R.J."/>
            <person name="Haft D.H."/>
            <person name="Merkel J.S."/>
            <person name="Nelson W.C."/>
            <person name="Fraser C.M."/>
        </authorList>
    </citation>
    <scope>NUCLEOTIDE SEQUENCE [LARGE SCALE GENOMIC DNA]</scope>
    <source>
        <strain>104</strain>
    </source>
</reference>
<gene>
    <name evidence="1" type="primary">fgd</name>
    <name type="ordered locus">MAV_4761</name>
</gene>
<protein>
    <recommendedName>
        <fullName evidence="1">F420-dependent glucose-6-phosphate dehydrogenase</fullName>
        <shortName evidence="1">FGD</shortName>
        <shortName evidence="1">G6PD</shortName>
        <ecNumber evidence="1">1.1.98.2</ecNumber>
    </recommendedName>
</protein>
<proteinExistence type="inferred from homology"/>